<sequence length="634" mass="69529">MPSSVNRTSRTEPAGHHREFPLSLAAIDELVAEEEAEDARVLHLTANETVLSPRARAVLASPLTSRYLLEHLDMRGPSPARLGNLLLRGLDRIGTIEESATEVCRRLFGARYAEFRCLSGLHAMQTTFAALSRPGDTVMRVATKDGGHFLTELICRSFGRRSCTYVFDDTMTIDLERTREVVEKERPSLLFVDAMNYLFPFPIAELKAIAGDVPLVFDASHTLGLIAGGRFQDPLREGADLLQANTHKTFFGPQKGIILGNDRSLMEELGYTLSTGMVSSQHTASTVALLIALHEMWYDGREYAAQVIDNARRLAGALRDRGVPVVAEERGFTANHMFFVDTRPLGSGPAVIQRLVRAGVSANRAVAFNHLDTIRFGVQEITRRGYDHDDLDEAADLVAAVLLERQEPERIRPRVAELVGRRRTVRYTGDPASAAGPPARERYAPPTAPAGHPARPRWIGVRLTPLPEPVTEAECAGAQRLGRLAGAFPHQIDSSGNVSFTSTDGRLFVTGSGTYIKDLAPGDFVELTGAEGWTLHCRGDGPPSAEAYLHHLLRERVGARYVVHNHCIPGRALETSGALVIPPKEYGSVALAEAVADACQDSQVMYVRRHGLVFWAHSYDECLALIEDVRRITG</sequence>
<accession>B6VP39</accession>
<organism>
    <name type="scientific">Streptantibioticus cattleyicolor</name>
    <name type="common">Streptomyces cattleya</name>
    <dbReference type="NCBI Taxonomy" id="29303"/>
    <lineage>
        <taxon>Bacteria</taxon>
        <taxon>Bacillati</taxon>
        <taxon>Actinomycetota</taxon>
        <taxon>Actinomycetes</taxon>
        <taxon>Kitasatosporales</taxon>
        <taxon>Streptomycetaceae</taxon>
        <taxon>Streptantibioticus</taxon>
    </lineage>
</organism>
<comment type="function">
    <text evidence="3">Transaldolase that catalyzes the final step in 4-fluorothreonine biosynthesis. Mediates a L-threonine/fluoroaceldehyde to 4-fluoro-L-threonine/acetaldehyde crossover reaction. Can also convert chloroacetaldehyde into 4-chloro-L-threonine. Does not use glycine as a substrate.</text>
</comment>
<comment type="catalytic activity">
    <reaction evidence="3">
        <text>fluoroacetaldehyde + L-threonine = 4-fluoro-L-threonine + acetaldehyde</text>
        <dbReference type="Rhea" id="RHEA:11748"/>
        <dbReference type="ChEBI" id="CHEBI:14272"/>
        <dbReference type="ChEBI" id="CHEBI:15343"/>
        <dbReference type="ChEBI" id="CHEBI:57264"/>
        <dbReference type="ChEBI" id="CHEBI:57926"/>
        <dbReference type="EC" id="2.2.1.8"/>
    </reaction>
</comment>
<comment type="cofactor">
    <cofactor evidence="3">
        <name>pyridoxal 5'-phosphate</name>
        <dbReference type="ChEBI" id="CHEBI:597326"/>
    </cofactor>
</comment>
<comment type="similarity">
    <text evidence="4">Belongs to the SHMT family.</text>
</comment>
<protein>
    <recommendedName>
        <fullName>Fluorothreonine transaldolase</fullName>
        <ecNumber>2.2.1.8</ecNumber>
    </recommendedName>
    <alternativeName>
        <fullName>4-fluorothreonine transaldolase</fullName>
        <shortName>4-FTase</shortName>
    </alternativeName>
</protein>
<reference key="1">
    <citation type="journal article" date="2008" name="Chem. Biol.">
        <title>In vitro reconstituted biotransformation of 4-fluorothreonine from fluoride ion: application of the fluorinase.</title>
        <authorList>
            <person name="Deng H."/>
            <person name="Cross S.M."/>
            <person name="McGlinchey R.P."/>
            <person name="Hamilton J.T."/>
            <person name="O'Hagan D."/>
        </authorList>
    </citation>
    <scope>NUCLEOTIDE SEQUENCE [GENOMIC DNA]</scope>
    <scope>PROTEIN SEQUENCE OF 82-88; 303-312 AND 369-383</scope>
    <scope>FUNCTION</scope>
    <scope>CATALYTIC ACTIVITY</scope>
    <scope>COFACTOR</scope>
</reference>
<feature type="chain" id="PRO_0000419110" description="Fluorothreonine transaldolase">
    <location>
        <begin position="1"/>
        <end position="634"/>
    </location>
</feature>
<feature type="region of interest" description="Disordered" evidence="2">
    <location>
        <begin position="428"/>
        <end position="456"/>
    </location>
</feature>
<feature type="binding site" evidence="1">
    <location>
        <position position="67"/>
    </location>
    <ligand>
        <name>pyridoxal 5'-phosphate</name>
        <dbReference type="ChEBI" id="CHEBI:597326"/>
    </ligand>
</feature>
<feature type="binding site" evidence="1">
    <location>
        <position position="221"/>
    </location>
    <ligand>
        <name>pyridoxal 5'-phosphate</name>
        <dbReference type="ChEBI" id="CHEBI:597326"/>
    </ligand>
</feature>
<feature type="binding site" evidence="1">
    <location>
        <position position="247"/>
    </location>
    <ligand>
        <name>pyridoxal 5'-phosphate</name>
        <dbReference type="ChEBI" id="CHEBI:597326"/>
    </ligand>
</feature>
<feature type="binding site" evidence="1">
    <location>
        <position position="375"/>
    </location>
    <ligand>
        <name>pyridoxal 5'-phosphate</name>
        <dbReference type="ChEBI" id="CHEBI:597326"/>
    </ligand>
</feature>
<feature type="modified residue" description="N6-(pyridoxal phosphate)lysine" evidence="1">
    <location>
        <position position="248"/>
    </location>
</feature>
<keyword id="KW-0903">Direct protein sequencing</keyword>
<keyword id="KW-0663">Pyridoxal phosphate</keyword>
<keyword id="KW-0808">Transferase</keyword>
<proteinExistence type="evidence at protein level"/>
<evidence type="ECO:0000250" key="1"/>
<evidence type="ECO:0000256" key="2">
    <source>
        <dbReference type="SAM" id="MobiDB-lite"/>
    </source>
</evidence>
<evidence type="ECO:0000269" key="3">
    <source>
    </source>
</evidence>
<evidence type="ECO:0000305" key="4"/>
<name>4FTAS_STRCT</name>
<dbReference type="EC" id="2.2.1.8"/>
<dbReference type="EMBL" id="FM251921">
    <property type="protein sequence ID" value="CAR92347.1"/>
    <property type="molecule type" value="Genomic_DNA"/>
</dbReference>
<dbReference type="SMR" id="B6VP39"/>
<dbReference type="BioCyc" id="MetaCyc:MONOMER-15924"/>
<dbReference type="BRENDA" id="2.2.1.8">
    <property type="organism ID" value="5990"/>
</dbReference>
<dbReference type="GO" id="GO:0005737">
    <property type="term" value="C:cytoplasm"/>
    <property type="evidence" value="ECO:0007669"/>
    <property type="project" value="TreeGrafter"/>
</dbReference>
<dbReference type="GO" id="GO:0033806">
    <property type="term" value="F:fluorothreonine transaldolase activity"/>
    <property type="evidence" value="ECO:0007669"/>
    <property type="project" value="UniProtKB-EC"/>
</dbReference>
<dbReference type="GO" id="GO:0004372">
    <property type="term" value="F:glycine hydroxymethyltransferase activity"/>
    <property type="evidence" value="ECO:0007669"/>
    <property type="project" value="TreeGrafter"/>
</dbReference>
<dbReference type="GO" id="GO:0030170">
    <property type="term" value="F:pyridoxal phosphate binding"/>
    <property type="evidence" value="ECO:0007669"/>
    <property type="project" value="TreeGrafter"/>
</dbReference>
<dbReference type="GO" id="GO:0019264">
    <property type="term" value="P:glycine biosynthetic process from serine"/>
    <property type="evidence" value="ECO:0007669"/>
    <property type="project" value="TreeGrafter"/>
</dbReference>
<dbReference type="GO" id="GO:0046653">
    <property type="term" value="P:tetrahydrofolate metabolic process"/>
    <property type="evidence" value="ECO:0007669"/>
    <property type="project" value="TreeGrafter"/>
</dbReference>
<dbReference type="Gene3D" id="3.90.1150.10">
    <property type="entry name" value="Aspartate Aminotransferase, domain 1"/>
    <property type="match status" value="1"/>
</dbReference>
<dbReference type="Gene3D" id="3.40.225.10">
    <property type="entry name" value="Class II aldolase/adducin N-terminal domain"/>
    <property type="match status" value="1"/>
</dbReference>
<dbReference type="Gene3D" id="3.40.640.10">
    <property type="entry name" value="Type I PLP-dependent aspartate aminotransferase-like (Major domain)"/>
    <property type="match status" value="1"/>
</dbReference>
<dbReference type="InterPro" id="IPR001303">
    <property type="entry name" value="Aldolase_II/adducin_N"/>
</dbReference>
<dbReference type="InterPro" id="IPR036409">
    <property type="entry name" value="Aldolase_II/adducin_N_sf"/>
</dbReference>
<dbReference type="InterPro" id="IPR030979">
    <property type="entry name" value="F_threo_transal"/>
</dbReference>
<dbReference type="InterPro" id="IPR015424">
    <property type="entry name" value="PyrdxlP-dep_Trfase"/>
</dbReference>
<dbReference type="InterPro" id="IPR015421">
    <property type="entry name" value="PyrdxlP-dep_Trfase_major"/>
</dbReference>
<dbReference type="InterPro" id="IPR015422">
    <property type="entry name" value="PyrdxlP-dep_Trfase_small"/>
</dbReference>
<dbReference type="InterPro" id="IPR049943">
    <property type="entry name" value="Ser_HO-MeTrfase-like"/>
</dbReference>
<dbReference type="InterPro" id="IPR039429">
    <property type="entry name" value="SHMT-like_dom"/>
</dbReference>
<dbReference type="NCBIfam" id="TIGR04506">
    <property type="entry name" value="F_threo_transal"/>
    <property type="match status" value="1"/>
</dbReference>
<dbReference type="PANTHER" id="PTHR11680">
    <property type="entry name" value="SERINE HYDROXYMETHYLTRANSFERASE"/>
    <property type="match status" value="1"/>
</dbReference>
<dbReference type="PANTHER" id="PTHR11680:SF35">
    <property type="entry name" value="SERINE HYDROXYMETHYLTRANSFERASE 1"/>
    <property type="match status" value="1"/>
</dbReference>
<dbReference type="Pfam" id="PF00596">
    <property type="entry name" value="Aldolase_II"/>
    <property type="match status" value="1"/>
</dbReference>
<dbReference type="Pfam" id="PF00464">
    <property type="entry name" value="SHMT"/>
    <property type="match status" value="1"/>
</dbReference>
<dbReference type="SMART" id="SM01007">
    <property type="entry name" value="Aldolase_II"/>
    <property type="match status" value="1"/>
</dbReference>
<dbReference type="SUPFAM" id="SSF53639">
    <property type="entry name" value="AraD/HMP-PK domain-like"/>
    <property type="match status" value="1"/>
</dbReference>
<dbReference type="SUPFAM" id="SSF53383">
    <property type="entry name" value="PLP-dependent transferases"/>
    <property type="match status" value="1"/>
</dbReference>